<proteinExistence type="evidence at transcript level"/>
<comment type="function">
    <text evidence="2">May repress the transcriptional activity of AP-2 family members, including TFAP2A, TFAP2B and TFAP2C to various extent.</text>
</comment>
<comment type="subunit">
    <text evidence="2">Forms homopentamers. Interacts with KCTD15, probably forming heteropentamers depending on its abundance in a cell-type dependent manner. Interacts with TFAP2A, TFAP2B and TFAP2C via the BTB domain.</text>
</comment>
<comment type="subcellular location">
    <subcellularLocation>
        <location evidence="2">Nucleus</location>
    </subcellularLocation>
</comment>
<comment type="PTM">
    <text evidence="1">Sumoylated.</text>
</comment>
<accession>Q2HJ48</accession>
<organism>
    <name type="scientific">Bos taurus</name>
    <name type="common">Bovine</name>
    <dbReference type="NCBI Taxonomy" id="9913"/>
    <lineage>
        <taxon>Eukaryota</taxon>
        <taxon>Metazoa</taxon>
        <taxon>Chordata</taxon>
        <taxon>Craniata</taxon>
        <taxon>Vertebrata</taxon>
        <taxon>Euteleostomi</taxon>
        <taxon>Mammalia</taxon>
        <taxon>Eutheria</taxon>
        <taxon>Laurasiatheria</taxon>
        <taxon>Artiodactyla</taxon>
        <taxon>Ruminantia</taxon>
        <taxon>Pecora</taxon>
        <taxon>Bovidae</taxon>
        <taxon>Bovinae</taxon>
        <taxon>Bos</taxon>
    </lineage>
</organism>
<evidence type="ECO:0000250" key="1"/>
<evidence type="ECO:0000250" key="2">
    <source>
        <dbReference type="UniProtKB" id="Q719H9"/>
    </source>
</evidence>
<evidence type="ECO:0000256" key="3">
    <source>
        <dbReference type="SAM" id="MobiDB-lite"/>
    </source>
</evidence>
<feature type="chain" id="PRO_0000247143" description="BTB/POZ domain-containing protein KCTD1">
    <location>
        <begin position="1"/>
        <end position="257"/>
    </location>
</feature>
<feature type="domain" description="BTB">
    <location>
        <begin position="30"/>
        <end position="100"/>
    </location>
</feature>
<feature type="region of interest" description="Disordered" evidence="3">
    <location>
        <begin position="1"/>
        <end position="25"/>
    </location>
</feature>
<feature type="compositionally biased region" description="Polar residues" evidence="3">
    <location>
        <begin position="9"/>
        <end position="25"/>
    </location>
</feature>
<feature type="modified residue" description="Phosphoserine" evidence="2">
    <location>
        <position position="9"/>
    </location>
</feature>
<feature type="modified residue" description="Phosphoserine" evidence="2">
    <location>
        <position position="12"/>
    </location>
</feature>
<dbReference type="EMBL" id="BC113314">
    <property type="protein sequence ID" value="AAI13315.1"/>
    <property type="molecule type" value="mRNA"/>
</dbReference>
<dbReference type="RefSeq" id="NP_001073829.1">
    <property type="nucleotide sequence ID" value="NM_001080360.1"/>
</dbReference>
<dbReference type="RefSeq" id="XP_005224134.1">
    <property type="nucleotide sequence ID" value="XM_005224077.5"/>
</dbReference>
<dbReference type="SMR" id="Q2HJ48"/>
<dbReference type="FunCoup" id="Q2HJ48">
    <property type="interactions" value="564"/>
</dbReference>
<dbReference type="STRING" id="9913.ENSBTAP00000071458"/>
<dbReference type="PaxDb" id="9913-ENSBTAP00000018944"/>
<dbReference type="GeneID" id="784587"/>
<dbReference type="KEGG" id="bta:784587"/>
<dbReference type="CTD" id="284252"/>
<dbReference type="eggNOG" id="KOG2723">
    <property type="taxonomic scope" value="Eukaryota"/>
</dbReference>
<dbReference type="HOGENOM" id="CLU_061268_1_0_1"/>
<dbReference type="InParanoid" id="Q2HJ48"/>
<dbReference type="OrthoDB" id="2414723at2759"/>
<dbReference type="TreeFam" id="TF315332"/>
<dbReference type="Proteomes" id="UP000009136">
    <property type="component" value="Unplaced"/>
</dbReference>
<dbReference type="GO" id="GO:0005634">
    <property type="term" value="C:nucleus"/>
    <property type="evidence" value="ECO:0000250"/>
    <property type="project" value="UniProtKB"/>
</dbReference>
<dbReference type="GO" id="GO:0003714">
    <property type="term" value="F:transcription corepressor activity"/>
    <property type="evidence" value="ECO:0000318"/>
    <property type="project" value="GO_Central"/>
</dbReference>
<dbReference type="GO" id="GO:0045892">
    <property type="term" value="P:negative regulation of DNA-templated transcription"/>
    <property type="evidence" value="ECO:0000250"/>
    <property type="project" value="UniProtKB"/>
</dbReference>
<dbReference type="GO" id="GO:0051260">
    <property type="term" value="P:protein homooligomerization"/>
    <property type="evidence" value="ECO:0007669"/>
    <property type="project" value="InterPro"/>
</dbReference>
<dbReference type="CDD" id="cd18387">
    <property type="entry name" value="BTB_POZ_KCTD1"/>
    <property type="match status" value="1"/>
</dbReference>
<dbReference type="FunFam" id="3.30.710.10:FF:000003">
    <property type="entry name" value="BTB/POZ domain-containing protein KCTD6 isoform X2"/>
    <property type="match status" value="1"/>
</dbReference>
<dbReference type="Gene3D" id="3.30.710.10">
    <property type="entry name" value="Potassium Channel Kv1.1, Chain A"/>
    <property type="match status" value="1"/>
</dbReference>
<dbReference type="InterPro" id="IPR000210">
    <property type="entry name" value="BTB/POZ_dom"/>
</dbReference>
<dbReference type="InterPro" id="IPR048599">
    <property type="entry name" value="BTB_POZ_KCTD1"/>
</dbReference>
<dbReference type="InterPro" id="IPR048595">
    <property type="entry name" value="KCTD1-15-like_C"/>
</dbReference>
<dbReference type="InterPro" id="IPR011333">
    <property type="entry name" value="SKP1/BTB/POZ_sf"/>
</dbReference>
<dbReference type="InterPro" id="IPR003131">
    <property type="entry name" value="T1-type_BTB"/>
</dbReference>
<dbReference type="PANTHER" id="PTHR14499:SF65">
    <property type="entry name" value="BTB_POZ DOMAIN-CONTAINING PROTEIN KCTD1"/>
    <property type="match status" value="1"/>
</dbReference>
<dbReference type="PANTHER" id="PTHR14499">
    <property type="entry name" value="POTASSIUM CHANNEL TETRAMERIZATION DOMAIN-CONTAINING"/>
    <property type="match status" value="1"/>
</dbReference>
<dbReference type="Pfam" id="PF02214">
    <property type="entry name" value="BTB_2"/>
    <property type="match status" value="1"/>
</dbReference>
<dbReference type="Pfam" id="PF20871">
    <property type="entry name" value="KCTD1-15_CTD"/>
    <property type="match status" value="1"/>
</dbReference>
<dbReference type="SMART" id="SM00225">
    <property type="entry name" value="BTB"/>
    <property type="match status" value="1"/>
</dbReference>
<dbReference type="SUPFAM" id="SSF54695">
    <property type="entry name" value="POZ domain"/>
    <property type="match status" value="1"/>
</dbReference>
<sequence>MSRPLITRSPASPLNNQGIPTPAQLTKSNAPVHIDVGGHMYTSSLATLTKYPESRIGRLFDGTEPIVLDSLKQHYFIDRDGQMFRYILNFLRTSKLLIPDDFKDYTLLYEEAKYFQLQPMLLEMERWKQDRESGRFSRPCECLVVRVAPDLGERITLSGDKSLIEEVFPEIGDVMCNSVNAGWNHDSTHVIRFPLNGYCHLNSVQVLERLQQRGFEVVGSCGGGVDSSQFSEYVLRRELRRTPRGPSVIRIKQEPLD</sequence>
<keyword id="KW-0539">Nucleus</keyword>
<keyword id="KW-0597">Phosphoprotein</keyword>
<keyword id="KW-1185">Reference proteome</keyword>
<keyword id="KW-0678">Repressor</keyword>
<keyword id="KW-0804">Transcription</keyword>
<keyword id="KW-0805">Transcription regulation</keyword>
<keyword id="KW-0832">Ubl conjugation</keyword>
<protein>
    <recommendedName>
        <fullName>BTB/POZ domain-containing protein KCTD1</fullName>
    </recommendedName>
</protein>
<reference key="1">
    <citation type="submission" date="2006-02" db="EMBL/GenBank/DDBJ databases">
        <authorList>
            <consortium name="NIH - Mammalian Gene Collection (MGC) project"/>
        </authorList>
    </citation>
    <scope>NUCLEOTIDE SEQUENCE [LARGE SCALE MRNA]</scope>
    <source>
        <strain>Hereford</strain>
        <tissue>Uterus</tissue>
    </source>
</reference>
<gene>
    <name type="primary">KCTD1</name>
</gene>
<name>KCTD1_BOVIN</name>